<name>PUP_MYCGI</name>
<sequence>MAQEQTKRGGGGGEDDDPTGSTAAGQERREKLTEETDDLLDEIDDVLEENAEDFVRAYVQKGGQ</sequence>
<feature type="chain" id="PRO_0000390591" description="Prokaryotic ubiquitin-like protein Pup">
    <location>
        <begin position="1"/>
        <end position="64"/>
    </location>
</feature>
<feature type="region of interest" description="Disordered" evidence="2">
    <location>
        <begin position="1"/>
        <end position="38"/>
    </location>
</feature>
<feature type="region of interest" description="ARC ATPase binding" evidence="1">
    <location>
        <begin position="21"/>
        <end position="58"/>
    </location>
</feature>
<feature type="coiled-coil region" evidence="1">
    <location>
        <begin position="23"/>
        <end position="52"/>
    </location>
</feature>
<feature type="modified residue" description="Deamidated glutamine" evidence="1">
    <location>
        <position position="64"/>
    </location>
</feature>
<feature type="cross-link" description="Isoglutamyl lysine isopeptide (Gln-Lys) (interchain with K-? in acceptor proteins)" evidence="1">
    <location>
        <position position="64"/>
    </location>
</feature>
<protein>
    <recommendedName>
        <fullName evidence="1">Prokaryotic ubiquitin-like protein Pup</fullName>
    </recommendedName>
    <alternativeName>
        <fullName evidence="1">Bacterial ubiquitin-like modifier</fullName>
    </alternativeName>
</protein>
<gene>
    <name evidence="1" type="primary">pup</name>
    <name type="ordered locus">Mflv_3076</name>
</gene>
<keyword id="KW-0175">Coiled coil</keyword>
<keyword id="KW-1017">Isopeptide bond</keyword>
<keyword id="KW-0833">Ubl conjugation pathway</keyword>
<reference key="1">
    <citation type="submission" date="2007-04" db="EMBL/GenBank/DDBJ databases">
        <title>Complete sequence of chromosome of Mycobacterium gilvum PYR-GCK.</title>
        <authorList>
            <consortium name="US DOE Joint Genome Institute"/>
            <person name="Copeland A."/>
            <person name="Lucas S."/>
            <person name="Lapidus A."/>
            <person name="Barry K."/>
            <person name="Detter J.C."/>
            <person name="Glavina del Rio T."/>
            <person name="Hammon N."/>
            <person name="Israni S."/>
            <person name="Dalin E."/>
            <person name="Tice H."/>
            <person name="Pitluck S."/>
            <person name="Chain P."/>
            <person name="Malfatti S."/>
            <person name="Shin M."/>
            <person name="Vergez L."/>
            <person name="Schmutz J."/>
            <person name="Larimer F."/>
            <person name="Land M."/>
            <person name="Hauser L."/>
            <person name="Kyrpides N."/>
            <person name="Mikhailova N."/>
            <person name="Miller C."/>
            <person name="Richardson P."/>
        </authorList>
    </citation>
    <scope>NUCLEOTIDE SEQUENCE [LARGE SCALE GENOMIC DNA]</scope>
    <source>
        <strain>PYR-GCK</strain>
    </source>
</reference>
<organism>
    <name type="scientific">Mycolicibacterium gilvum (strain PYR-GCK)</name>
    <name type="common">Mycobacterium gilvum (strain PYR-GCK)</name>
    <dbReference type="NCBI Taxonomy" id="350054"/>
    <lineage>
        <taxon>Bacteria</taxon>
        <taxon>Bacillati</taxon>
        <taxon>Actinomycetota</taxon>
        <taxon>Actinomycetes</taxon>
        <taxon>Mycobacteriales</taxon>
        <taxon>Mycobacteriaceae</taxon>
        <taxon>Mycolicibacterium</taxon>
    </lineage>
</organism>
<comment type="function">
    <text evidence="1">Protein modifier that is covalently attached to lysine residues of substrate proteins, thereby targeting them for proteasomal degradation. The tagging system is termed pupylation.</text>
</comment>
<comment type="pathway">
    <text evidence="1">Protein degradation; proteasomal Pup-dependent pathway.</text>
</comment>
<comment type="subunit">
    <text evidence="1">Strongly interacts with the proteasome-associated ATPase ARC through a hydrophobic interface; the interacting region of Pup lies in its C-terminal half. There is one Pup binding site per ARC hexamer ring.</text>
</comment>
<comment type="domain">
    <text evidence="1">The N-terminal unstructured half of Pup provides a signal required to initiate unfolding and degradation by the proteasome but is not needed for pupylation, while the C-terminal helical half of Pup interacts with ARC to target proteins to the proteasome.</text>
</comment>
<comment type="PTM">
    <text evidence="1">Is modified by deamidation of its C-terminal glutamine to glutamate by the deamidase Dop, a prerequisite to the subsequent pupylation process.</text>
</comment>
<comment type="similarity">
    <text evidence="1">Belongs to the prokaryotic ubiquitin-like protein family.</text>
</comment>
<dbReference type="EMBL" id="CP000656">
    <property type="protein sequence ID" value="ABP45553.1"/>
    <property type="molecule type" value="Genomic_DNA"/>
</dbReference>
<dbReference type="SMR" id="A4TB63"/>
<dbReference type="STRING" id="350054.Mflv_3076"/>
<dbReference type="KEGG" id="mgi:Mflv_3076"/>
<dbReference type="eggNOG" id="ENOG50333JS">
    <property type="taxonomic scope" value="Bacteria"/>
</dbReference>
<dbReference type="HOGENOM" id="CLU_183816_1_0_11"/>
<dbReference type="UniPathway" id="UPA00997"/>
<dbReference type="GO" id="GO:0070628">
    <property type="term" value="F:proteasome binding"/>
    <property type="evidence" value="ECO:0007669"/>
    <property type="project" value="UniProtKB-UniRule"/>
</dbReference>
<dbReference type="GO" id="GO:0031386">
    <property type="term" value="F:protein tag activity"/>
    <property type="evidence" value="ECO:0007669"/>
    <property type="project" value="UniProtKB-UniRule"/>
</dbReference>
<dbReference type="GO" id="GO:0019941">
    <property type="term" value="P:modification-dependent protein catabolic process"/>
    <property type="evidence" value="ECO:0007669"/>
    <property type="project" value="UniProtKB-UniRule"/>
</dbReference>
<dbReference type="GO" id="GO:0010498">
    <property type="term" value="P:proteasomal protein catabolic process"/>
    <property type="evidence" value="ECO:0007669"/>
    <property type="project" value="UniProtKB-UniRule"/>
</dbReference>
<dbReference type="GO" id="GO:0070490">
    <property type="term" value="P:protein pupylation"/>
    <property type="evidence" value="ECO:0007669"/>
    <property type="project" value="UniProtKB-UniRule"/>
</dbReference>
<dbReference type="HAMAP" id="MF_02106">
    <property type="entry name" value="Pup"/>
    <property type="match status" value="1"/>
</dbReference>
<dbReference type="InterPro" id="IPR008515">
    <property type="entry name" value="Ubiquitin-like_Pup"/>
</dbReference>
<dbReference type="NCBIfam" id="TIGR03687">
    <property type="entry name" value="pupylate_cterm"/>
    <property type="match status" value="1"/>
</dbReference>
<dbReference type="Pfam" id="PF05639">
    <property type="entry name" value="Pup"/>
    <property type="match status" value="1"/>
</dbReference>
<proteinExistence type="inferred from homology"/>
<evidence type="ECO:0000255" key="1">
    <source>
        <dbReference type="HAMAP-Rule" id="MF_02106"/>
    </source>
</evidence>
<evidence type="ECO:0000256" key="2">
    <source>
        <dbReference type="SAM" id="MobiDB-lite"/>
    </source>
</evidence>
<accession>A4TB63</accession>